<gene>
    <name evidence="1" type="primary">gpmA</name>
    <name type="ordered locus">BMA3208</name>
</gene>
<reference key="1">
    <citation type="journal article" date="2004" name="Proc. Natl. Acad. Sci. U.S.A.">
        <title>Structural flexibility in the Burkholderia mallei genome.</title>
        <authorList>
            <person name="Nierman W.C."/>
            <person name="DeShazer D."/>
            <person name="Kim H.S."/>
            <person name="Tettelin H."/>
            <person name="Nelson K.E."/>
            <person name="Feldblyum T.V."/>
            <person name="Ulrich R.L."/>
            <person name="Ronning C.M."/>
            <person name="Brinkac L.M."/>
            <person name="Daugherty S.C."/>
            <person name="Davidsen T.D."/>
            <person name="DeBoy R.T."/>
            <person name="Dimitrov G."/>
            <person name="Dodson R.J."/>
            <person name="Durkin A.S."/>
            <person name="Gwinn M.L."/>
            <person name="Haft D.H."/>
            <person name="Khouri H.M."/>
            <person name="Kolonay J.F."/>
            <person name="Madupu R."/>
            <person name="Mohammoud Y."/>
            <person name="Nelson W.C."/>
            <person name="Radune D."/>
            <person name="Romero C.M."/>
            <person name="Sarria S."/>
            <person name="Selengut J."/>
            <person name="Shamblin C."/>
            <person name="Sullivan S.A."/>
            <person name="White O."/>
            <person name="Yu Y."/>
            <person name="Zafar N."/>
            <person name="Zhou L."/>
            <person name="Fraser C.M."/>
        </authorList>
    </citation>
    <scope>NUCLEOTIDE SEQUENCE [LARGE SCALE GENOMIC DNA]</scope>
    <source>
        <strain>ATCC 23344</strain>
    </source>
</reference>
<protein>
    <recommendedName>
        <fullName evidence="1">2,3-bisphosphoglycerate-dependent phosphoglycerate mutase</fullName>
        <shortName evidence="1">BPG-dependent PGAM</shortName>
        <shortName evidence="1">PGAM</shortName>
        <shortName evidence="1">Phosphoglyceromutase</shortName>
        <shortName evidence="1">dPGM</shortName>
        <ecNumber evidence="1">5.4.2.11</ecNumber>
    </recommendedName>
</protein>
<sequence length="249" mass="27893">MYKLVLIRHGESTWNKENRFTGWVDVDLTEQGNREARQAGQLLKEAGYTFDIAYTSVLKRAIRTLWHVQDQMDLMYVPVVHSWRLNERHYGALSGLNKAETAAKYGDEQVLVWRRSYDTPPPALEPGDERAPYADPRYAKVPREQLPLTECLKDTVARVLPLWNESIAPAVKAGKQVLIAAHGNSLRALIKYLDGISDADIVGLNIPNGVPLVYELDESLTPIRHYYLGDQEAIAKAQAAVAQQGKSAA</sequence>
<feature type="chain" id="PRO_0000229111" description="2,3-bisphosphoglycerate-dependent phosphoglycerate mutase">
    <location>
        <begin position="1"/>
        <end position="249"/>
    </location>
</feature>
<feature type="active site" description="Tele-phosphohistidine intermediate" evidence="1">
    <location>
        <position position="9"/>
    </location>
</feature>
<feature type="active site" description="Proton donor/acceptor" evidence="1">
    <location>
        <position position="87"/>
    </location>
</feature>
<feature type="binding site" evidence="1">
    <location>
        <begin position="8"/>
        <end position="15"/>
    </location>
    <ligand>
        <name>substrate</name>
    </ligand>
</feature>
<feature type="binding site" evidence="1">
    <location>
        <begin position="21"/>
        <end position="22"/>
    </location>
    <ligand>
        <name>substrate</name>
    </ligand>
</feature>
<feature type="binding site" evidence="1">
    <location>
        <position position="60"/>
    </location>
    <ligand>
        <name>substrate</name>
    </ligand>
</feature>
<feature type="binding site" evidence="1">
    <location>
        <begin position="87"/>
        <end position="90"/>
    </location>
    <ligand>
        <name>substrate</name>
    </ligand>
</feature>
<feature type="binding site" evidence="1">
    <location>
        <position position="98"/>
    </location>
    <ligand>
        <name>substrate</name>
    </ligand>
</feature>
<feature type="binding site" evidence="1">
    <location>
        <begin position="114"/>
        <end position="115"/>
    </location>
    <ligand>
        <name>substrate</name>
    </ligand>
</feature>
<feature type="binding site" evidence="1">
    <location>
        <begin position="183"/>
        <end position="184"/>
    </location>
    <ligand>
        <name>substrate</name>
    </ligand>
</feature>
<feature type="site" description="Transition state stabilizer" evidence="1">
    <location>
        <position position="182"/>
    </location>
</feature>
<evidence type="ECO:0000255" key="1">
    <source>
        <dbReference type="HAMAP-Rule" id="MF_01039"/>
    </source>
</evidence>
<keyword id="KW-0312">Gluconeogenesis</keyword>
<keyword id="KW-0324">Glycolysis</keyword>
<keyword id="KW-0413">Isomerase</keyword>
<keyword id="KW-1185">Reference proteome</keyword>
<organism>
    <name type="scientific">Burkholderia mallei (strain ATCC 23344)</name>
    <dbReference type="NCBI Taxonomy" id="243160"/>
    <lineage>
        <taxon>Bacteria</taxon>
        <taxon>Pseudomonadati</taxon>
        <taxon>Pseudomonadota</taxon>
        <taxon>Betaproteobacteria</taxon>
        <taxon>Burkholderiales</taxon>
        <taxon>Burkholderiaceae</taxon>
        <taxon>Burkholderia</taxon>
        <taxon>pseudomallei group</taxon>
    </lineage>
</organism>
<dbReference type="EC" id="5.4.2.11" evidence="1"/>
<dbReference type="EMBL" id="CP000010">
    <property type="protein sequence ID" value="AAU48541.1"/>
    <property type="molecule type" value="Genomic_DNA"/>
</dbReference>
<dbReference type="RefSeq" id="WP_004198007.1">
    <property type="nucleotide sequence ID" value="NC_006348.1"/>
</dbReference>
<dbReference type="RefSeq" id="YP_104684.1">
    <property type="nucleotide sequence ID" value="NC_006348.1"/>
</dbReference>
<dbReference type="SMR" id="Q62F43"/>
<dbReference type="GeneID" id="93058961"/>
<dbReference type="KEGG" id="bma:BMA3208"/>
<dbReference type="PATRIC" id="fig|243160.12.peg.3285"/>
<dbReference type="eggNOG" id="COG0588">
    <property type="taxonomic scope" value="Bacteria"/>
</dbReference>
<dbReference type="HOGENOM" id="CLU_033323_1_1_4"/>
<dbReference type="UniPathway" id="UPA00109">
    <property type="reaction ID" value="UER00186"/>
</dbReference>
<dbReference type="Proteomes" id="UP000006693">
    <property type="component" value="Chromosome 1"/>
</dbReference>
<dbReference type="GO" id="GO:0004619">
    <property type="term" value="F:phosphoglycerate mutase activity"/>
    <property type="evidence" value="ECO:0007669"/>
    <property type="project" value="UniProtKB-EC"/>
</dbReference>
<dbReference type="GO" id="GO:0006094">
    <property type="term" value="P:gluconeogenesis"/>
    <property type="evidence" value="ECO:0007669"/>
    <property type="project" value="UniProtKB-UniRule"/>
</dbReference>
<dbReference type="GO" id="GO:0006096">
    <property type="term" value="P:glycolytic process"/>
    <property type="evidence" value="ECO:0007669"/>
    <property type="project" value="UniProtKB-UniRule"/>
</dbReference>
<dbReference type="CDD" id="cd07067">
    <property type="entry name" value="HP_PGM_like"/>
    <property type="match status" value="1"/>
</dbReference>
<dbReference type="FunFam" id="3.40.50.1240:FF:000003">
    <property type="entry name" value="2,3-bisphosphoglycerate-dependent phosphoglycerate mutase"/>
    <property type="match status" value="1"/>
</dbReference>
<dbReference type="Gene3D" id="3.40.50.1240">
    <property type="entry name" value="Phosphoglycerate mutase-like"/>
    <property type="match status" value="1"/>
</dbReference>
<dbReference type="HAMAP" id="MF_01039">
    <property type="entry name" value="PGAM_GpmA"/>
    <property type="match status" value="1"/>
</dbReference>
<dbReference type="InterPro" id="IPR013078">
    <property type="entry name" value="His_Pase_superF_clade-1"/>
</dbReference>
<dbReference type="InterPro" id="IPR029033">
    <property type="entry name" value="His_PPase_superfam"/>
</dbReference>
<dbReference type="InterPro" id="IPR001345">
    <property type="entry name" value="PG/BPGM_mutase_AS"/>
</dbReference>
<dbReference type="InterPro" id="IPR005952">
    <property type="entry name" value="Phosphogly_mut1"/>
</dbReference>
<dbReference type="NCBIfam" id="TIGR01258">
    <property type="entry name" value="pgm_1"/>
    <property type="match status" value="1"/>
</dbReference>
<dbReference type="NCBIfam" id="NF010713">
    <property type="entry name" value="PRK14115.1"/>
    <property type="match status" value="1"/>
</dbReference>
<dbReference type="PANTHER" id="PTHR11931">
    <property type="entry name" value="PHOSPHOGLYCERATE MUTASE"/>
    <property type="match status" value="1"/>
</dbReference>
<dbReference type="Pfam" id="PF00300">
    <property type="entry name" value="His_Phos_1"/>
    <property type="match status" value="2"/>
</dbReference>
<dbReference type="PIRSF" id="PIRSF000709">
    <property type="entry name" value="6PFK_2-Ptase"/>
    <property type="match status" value="1"/>
</dbReference>
<dbReference type="SMART" id="SM00855">
    <property type="entry name" value="PGAM"/>
    <property type="match status" value="1"/>
</dbReference>
<dbReference type="SUPFAM" id="SSF53254">
    <property type="entry name" value="Phosphoglycerate mutase-like"/>
    <property type="match status" value="1"/>
</dbReference>
<dbReference type="PROSITE" id="PS00175">
    <property type="entry name" value="PG_MUTASE"/>
    <property type="match status" value="1"/>
</dbReference>
<comment type="function">
    <text evidence="1">Catalyzes the interconversion of 2-phosphoglycerate and 3-phosphoglycerate.</text>
</comment>
<comment type="catalytic activity">
    <reaction evidence="1">
        <text>(2R)-2-phosphoglycerate = (2R)-3-phosphoglycerate</text>
        <dbReference type="Rhea" id="RHEA:15901"/>
        <dbReference type="ChEBI" id="CHEBI:58272"/>
        <dbReference type="ChEBI" id="CHEBI:58289"/>
        <dbReference type="EC" id="5.4.2.11"/>
    </reaction>
</comment>
<comment type="pathway">
    <text evidence="1">Carbohydrate degradation; glycolysis; pyruvate from D-glyceraldehyde 3-phosphate: step 3/5.</text>
</comment>
<comment type="subunit">
    <text evidence="1">Homodimer.</text>
</comment>
<comment type="similarity">
    <text evidence="1">Belongs to the phosphoglycerate mutase family. BPG-dependent PGAM subfamily.</text>
</comment>
<proteinExistence type="inferred from homology"/>
<name>GPMA_BURMA</name>
<accession>Q62F43</accession>